<sequence length="159" mass="17923">MEKLRRVLSGQDDEEQGLTAQVLDASSLSFNTRLKWFVICFVAGIFFSFLGTGLLWLPNGMKLFAVFYTLGNLAALASTCFLMGPVKQLKKMFETTRLLATIIMLLCLVFTLCAALWWRKKGLALLFCILQFLSMTWYSLSYIPYARDAVLKCCSSLLG</sequence>
<organism>
    <name type="scientific">Mus musculus</name>
    <name type="common">Mouse</name>
    <dbReference type="NCBI Taxonomy" id="10090"/>
    <lineage>
        <taxon>Eukaryota</taxon>
        <taxon>Metazoa</taxon>
        <taxon>Chordata</taxon>
        <taxon>Craniata</taxon>
        <taxon>Vertebrata</taxon>
        <taxon>Euteleostomi</taxon>
        <taxon>Mammalia</taxon>
        <taxon>Eutheria</taxon>
        <taxon>Euarchontoglires</taxon>
        <taxon>Glires</taxon>
        <taxon>Rodentia</taxon>
        <taxon>Myomorpha</taxon>
        <taxon>Muroidea</taxon>
        <taxon>Muridae</taxon>
        <taxon>Murinae</taxon>
        <taxon>Mus</taxon>
        <taxon>Mus</taxon>
    </lineage>
</organism>
<evidence type="ECO:0000250" key="1">
    <source>
        <dbReference type="UniProtKB" id="P38166"/>
    </source>
</evidence>
<evidence type="ECO:0000250" key="2">
    <source>
        <dbReference type="UniProtKB" id="Q8WV19"/>
    </source>
</evidence>
<evidence type="ECO:0000255" key="3"/>
<evidence type="ECO:0000312" key="4">
    <source>
        <dbReference type="EMBL" id="AAH91770.1"/>
    </source>
</evidence>
<evidence type="ECO:0000312" key="5">
    <source>
        <dbReference type="EMBL" id="BAE30316.1"/>
    </source>
</evidence>
<evidence type="ECO:0000312" key="6">
    <source>
        <dbReference type="EMBL" id="CAI25035.1"/>
    </source>
</evidence>
<evidence type="ECO:0007744" key="7">
    <source>
    </source>
</evidence>
<comment type="function">
    <text evidence="1">May be involved in fusion of retrograde transport vesicles derived from an endocytic compartment with the Golgi complex.</text>
</comment>
<comment type="subcellular location">
    <subcellularLocation>
        <location evidence="3">Membrane</location>
        <topology evidence="3">Multi-pass membrane protein</topology>
    </subcellularLocation>
</comment>
<comment type="similarity">
    <text evidence="3">Belongs to the SFT2 family.</text>
</comment>
<accession>Q5SSN7</accession>
<accession>A1L3Q4</accession>
<dbReference type="EMBL" id="AK151338">
    <property type="protein sequence ID" value="BAE30316.1"/>
    <property type="molecule type" value="mRNA"/>
</dbReference>
<dbReference type="EMBL" id="AL663031">
    <property type="protein sequence ID" value="CAI25035.1"/>
    <property type="molecule type" value="Genomic_DNA"/>
</dbReference>
<dbReference type="EMBL" id="CH466619">
    <property type="protein sequence ID" value="EDL02112.1"/>
    <property type="molecule type" value="Genomic_DNA"/>
</dbReference>
<dbReference type="EMBL" id="BC091770">
    <property type="protein sequence ID" value="AAH91770.1"/>
    <property type="molecule type" value="mRNA"/>
</dbReference>
<dbReference type="EMBL" id="BC130232">
    <property type="protein sequence ID" value="AAI30233.1"/>
    <property type="molecule type" value="mRNA"/>
</dbReference>
<dbReference type="CCDS" id="CCDS49945.1"/>
<dbReference type="RefSeq" id="NP_598875.2">
    <property type="nucleotide sequence ID" value="NM_134114.2"/>
</dbReference>
<dbReference type="FunCoup" id="Q5SSN7">
    <property type="interactions" value="2589"/>
</dbReference>
<dbReference type="IntAct" id="Q5SSN7">
    <property type="interactions" value="1"/>
</dbReference>
<dbReference type="MINT" id="Q5SSN7"/>
<dbReference type="STRING" id="10090.ENSMUSP00000090857"/>
<dbReference type="iPTMnet" id="Q5SSN7"/>
<dbReference type="PhosphoSitePlus" id="Q5SSN7"/>
<dbReference type="SwissPalm" id="Q5SSN7"/>
<dbReference type="PaxDb" id="10090-ENSMUSP00000090857"/>
<dbReference type="ProteomicsDB" id="261197"/>
<dbReference type="Pumba" id="Q5SSN7"/>
<dbReference type="DNASU" id="106489"/>
<dbReference type="Ensembl" id="ENSMUST00000093169.3">
    <property type="protein sequence ID" value="ENSMUSP00000090857.3"/>
    <property type="gene ID" value="ENSMUSG00000069899.4"/>
</dbReference>
<dbReference type="Ensembl" id="ENSMUST00000154553.2">
    <property type="protein sequence ID" value="ENSMUSP00000117294.2"/>
    <property type="gene ID" value="ENSMUSG00000073468.13"/>
</dbReference>
<dbReference type="GeneID" id="106489"/>
<dbReference type="KEGG" id="mmu:106489"/>
<dbReference type="UCSC" id="uc008ajm.1">
    <property type="organism name" value="mouse"/>
</dbReference>
<dbReference type="AGR" id="MGI:1918689"/>
<dbReference type="CTD" id="113402"/>
<dbReference type="MGI" id="MGI:1918689">
    <property type="gene designation" value="Sft2d1"/>
</dbReference>
<dbReference type="VEuPathDB" id="HostDB:ENSMUSG00000069899"/>
<dbReference type="VEuPathDB" id="HostDB:ENSMUSG00000073468"/>
<dbReference type="eggNOG" id="KOG2887">
    <property type="taxonomic scope" value="Eukaryota"/>
</dbReference>
<dbReference type="GeneTree" id="ENSGT00390000018525"/>
<dbReference type="HOGENOM" id="CLU_099529_2_2_1"/>
<dbReference type="InParanoid" id="Q5SSN7"/>
<dbReference type="OMA" id="IAAIVWK"/>
<dbReference type="OrthoDB" id="73614at2759"/>
<dbReference type="PhylomeDB" id="Q5SSN7"/>
<dbReference type="TreeFam" id="TF315157"/>
<dbReference type="BioGRID-ORCS" id="106489">
    <property type="hits" value="2 hits in 75 CRISPR screens"/>
</dbReference>
<dbReference type="ChiTaRS" id="Sft2d1">
    <property type="organism name" value="mouse"/>
</dbReference>
<dbReference type="PRO" id="PR:Q5SSN7"/>
<dbReference type="Proteomes" id="UP000000589">
    <property type="component" value="Chromosome 11"/>
</dbReference>
<dbReference type="Proteomes" id="UP000000589">
    <property type="component" value="Chromosome 17"/>
</dbReference>
<dbReference type="RNAct" id="Q5SSN7">
    <property type="molecule type" value="protein"/>
</dbReference>
<dbReference type="Bgee" id="ENSMUSG00000069899">
    <property type="expression patterns" value="Expressed in blastoderm cell in morula and 54 other cell types or tissues"/>
</dbReference>
<dbReference type="ExpressionAtlas" id="Q5SSN7">
    <property type="expression patterns" value="baseline and differential"/>
</dbReference>
<dbReference type="GO" id="GO:0005737">
    <property type="term" value="C:cytoplasm"/>
    <property type="evidence" value="ECO:0007669"/>
    <property type="project" value="UniProtKB-ARBA"/>
</dbReference>
<dbReference type="GO" id="GO:0012505">
    <property type="term" value="C:endomembrane system"/>
    <property type="evidence" value="ECO:0007669"/>
    <property type="project" value="UniProtKB-ARBA"/>
</dbReference>
<dbReference type="GO" id="GO:0043231">
    <property type="term" value="C:intracellular membrane-bounded organelle"/>
    <property type="evidence" value="ECO:0007669"/>
    <property type="project" value="UniProtKB-ARBA"/>
</dbReference>
<dbReference type="GO" id="GO:0016020">
    <property type="term" value="C:membrane"/>
    <property type="evidence" value="ECO:0007669"/>
    <property type="project" value="UniProtKB-SubCell"/>
</dbReference>
<dbReference type="GO" id="GO:0015031">
    <property type="term" value="P:protein transport"/>
    <property type="evidence" value="ECO:0007669"/>
    <property type="project" value="UniProtKB-KW"/>
</dbReference>
<dbReference type="GO" id="GO:0016192">
    <property type="term" value="P:vesicle-mediated transport"/>
    <property type="evidence" value="ECO:0007669"/>
    <property type="project" value="InterPro"/>
</dbReference>
<dbReference type="InterPro" id="IPR007305">
    <property type="entry name" value="Vesicle_transpt_Got1/SFT2"/>
</dbReference>
<dbReference type="InterPro" id="IPR011691">
    <property type="entry name" value="Vesicle_transpt_SFT2"/>
</dbReference>
<dbReference type="PANTHER" id="PTHR23137:SF24">
    <property type="entry name" value="VESICLE TRANSPORT PROTEIN SFT2A"/>
    <property type="match status" value="1"/>
</dbReference>
<dbReference type="PANTHER" id="PTHR23137">
    <property type="entry name" value="VESICLE TRANSPORT PROTEIN-RELATED"/>
    <property type="match status" value="1"/>
</dbReference>
<dbReference type="Pfam" id="PF04178">
    <property type="entry name" value="Got1"/>
    <property type="match status" value="1"/>
</dbReference>
<protein>
    <recommendedName>
        <fullName>Vesicle transport protein SFT2A</fullName>
    </recommendedName>
    <alternativeName>
        <fullName>SFT2 domain-containing protein 1</fullName>
    </alternativeName>
</protein>
<proteinExistence type="evidence at protein level"/>
<reference evidence="5" key="1">
    <citation type="journal article" date="2005" name="Science">
        <title>The transcriptional landscape of the mammalian genome.</title>
        <authorList>
            <person name="Carninci P."/>
            <person name="Kasukawa T."/>
            <person name="Katayama S."/>
            <person name="Gough J."/>
            <person name="Frith M.C."/>
            <person name="Maeda N."/>
            <person name="Oyama R."/>
            <person name="Ravasi T."/>
            <person name="Lenhard B."/>
            <person name="Wells C."/>
            <person name="Kodzius R."/>
            <person name="Shimokawa K."/>
            <person name="Bajic V.B."/>
            <person name="Brenner S.E."/>
            <person name="Batalov S."/>
            <person name="Forrest A.R."/>
            <person name="Zavolan M."/>
            <person name="Davis M.J."/>
            <person name="Wilming L.G."/>
            <person name="Aidinis V."/>
            <person name="Allen J.E."/>
            <person name="Ambesi-Impiombato A."/>
            <person name="Apweiler R."/>
            <person name="Aturaliya R.N."/>
            <person name="Bailey T.L."/>
            <person name="Bansal M."/>
            <person name="Baxter L."/>
            <person name="Beisel K.W."/>
            <person name="Bersano T."/>
            <person name="Bono H."/>
            <person name="Chalk A.M."/>
            <person name="Chiu K.P."/>
            <person name="Choudhary V."/>
            <person name="Christoffels A."/>
            <person name="Clutterbuck D.R."/>
            <person name="Crowe M.L."/>
            <person name="Dalla E."/>
            <person name="Dalrymple B.P."/>
            <person name="de Bono B."/>
            <person name="Della Gatta G."/>
            <person name="di Bernardo D."/>
            <person name="Down T."/>
            <person name="Engstrom P."/>
            <person name="Fagiolini M."/>
            <person name="Faulkner G."/>
            <person name="Fletcher C.F."/>
            <person name="Fukushima T."/>
            <person name="Furuno M."/>
            <person name="Futaki S."/>
            <person name="Gariboldi M."/>
            <person name="Georgii-Hemming P."/>
            <person name="Gingeras T.R."/>
            <person name="Gojobori T."/>
            <person name="Green R.E."/>
            <person name="Gustincich S."/>
            <person name="Harbers M."/>
            <person name="Hayashi Y."/>
            <person name="Hensch T.K."/>
            <person name="Hirokawa N."/>
            <person name="Hill D."/>
            <person name="Huminiecki L."/>
            <person name="Iacono M."/>
            <person name="Ikeo K."/>
            <person name="Iwama A."/>
            <person name="Ishikawa T."/>
            <person name="Jakt M."/>
            <person name="Kanapin A."/>
            <person name="Katoh M."/>
            <person name="Kawasawa Y."/>
            <person name="Kelso J."/>
            <person name="Kitamura H."/>
            <person name="Kitano H."/>
            <person name="Kollias G."/>
            <person name="Krishnan S.P."/>
            <person name="Kruger A."/>
            <person name="Kummerfeld S.K."/>
            <person name="Kurochkin I.V."/>
            <person name="Lareau L.F."/>
            <person name="Lazarevic D."/>
            <person name="Lipovich L."/>
            <person name="Liu J."/>
            <person name="Liuni S."/>
            <person name="McWilliam S."/>
            <person name="Madan Babu M."/>
            <person name="Madera M."/>
            <person name="Marchionni L."/>
            <person name="Matsuda H."/>
            <person name="Matsuzawa S."/>
            <person name="Miki H."/>
            <person name="Mignone F."/>
            <person name="Miyake S."/>
            <person name="Morris K."/>
            <person name="Mottagui-Tabar S."/>
            <person name="Mulder N."/>
            <person name="Nakano N."/>
            <person name="Nakauchi H."/>
            <person name="Ng P."/>
            <person name="Nilsson R."/>
            <person name="Nishiguchi S."/>
            <person name="Nishikawa S."/>
            <person name="Nori F."/>
            <person name="Ohara O."/>
            <person name="Okazaki Y."/>
            <person name="Orlando V."/>
            <person name="Pang K.C."/>
            <person name="Pavan W.J."/>
            <person name="Pavesi G."/>
            <person name="Pesole G."/>
            <person name="Petrovsky N."/>
            <person name="Piazza S."/>
            <person name="Reed J."/>
            <person name="Reid J.F."/>
            <person name="Ring B.Z."/>
            <person name="Ringwald M."/>
            <person name="Rost B."/>
            <person name="Ruan Y."/>
            <person name="Salzberg S.L."/>
            <person name="Sandelin A."/>
            <person name="Schneider C."/>
            <person name="Schoenbach C."/>
            <person name="Sekiguchi K."/>
            <person name="Semple C.A."/>
            <person name="Seno S."/>
            <person name="Sessa L."/>
            <person name="Sheng Y."/>
            <person name="Shibata Y."/>
            <person name="Shimada H."/>
            <person name="Shimada K."/>
            <person name="Silva D."/>
            <person name="Sinclair B."/>
            <person name="Sperling S."/>
            <person name="Stupka E."/>
            <person name="Sugiura K."/>
            <person name="Sultana R."/>
            <person name="Takenaka Y."/>
            <person name="Taki K."/>
            <person name="Tammoja K."/>
            <person name="Tan S.L."/>
            <person name="Tang S."/>
            <person name="Taylor M.S."/>
            <person name="Tegner J."/>
            <person name="Teichmann S.A."/>
            <person name="Ueda H.R."/>
            <person name="van Nimwegen E."/>
            <person name="Verardo R."/>
            <person name="Wei C.L."/>
            <person name="Yagi K."/>
            <person name="Yamanishi H."/>
            <person name="Zabarovsky E."/>
            <person name="Zhu S."/>
            <person name="Zimmer A."/>
            <person name="Hide W."/>
            <person name="Bult C."/>
            <person name="Grimmond S.M."/>
            <person name="Teasdale R.D."/>
            <person name="Liu E.T."/>
            <person name="Brusic V."/>
            <person name="Quackenbush J."/>
            <person name="Wahlestedt C."/>
            <person name="Mattick J.S."/>
            <person name="Hume D.A."/>
            <person name="Kai C."/>
            <person name="Sasaki D."/>
            <person name="Tomaru Y."/>
            <person name="Fukuda S."/>
            <person name="Kanamori-Katayama M."/>
            <person name="Suzuki M."/>
            <person name="Aoki J."/>
            <person name="Arakawa T."/>
            <person name="Iida J."/>
            <person name="Imamura K."/>
            <person name="Itoh M."/>
            <person name="Kato T."/>
            <person name="Kawaji H."/>
            <person name="Kawagashira N."/>
            <person name="Kawashima T."/>
            <person name="Kojima M."/>
            <person name="Kondo S."/>
            <person name="Konno H."/>
            <person name="Nakano K."/>
            <person name="Ninomiya N."/>
            <person name="Nishio T."/>
            <person name="Okada M."/>
            <person name="Plessy C."/>
            <person name="Shibata K."/>
            <person name="Shiraki T."/>
            <person name="Suzuki S."/>
            <person name="Tagami M."/>
            <person name="Waki K."/>
            <person name="Watahiki A."/>
            <person name="Okamura-Oho Y."/>
            <person name="Suzuki H."/>
            <person name="Kawai J."/>
            <person name="Hayashizaki Y."/>
        </authorList>
    </citation>
    <scope>NUCLEOTIDE SEQUENCE [LARGE SCALE MRNA]</scope>
    <source>
        <strain evidence="5">C57BL/6J</strain>
        <tissue evidence="5">Bone marrow</tissue>
    </source>
</reference>
<reference key="2">
    <citation type="journal article" date="2009" name="PLoS Biol.">
        <title>Lineage-specific biology revealed by a finished genome assembly of the mouse.</title>
        <authorList>
            <person name="Church D.M."/>
            <person name="Goodstadt L."/>
            <person name="Hillier L.W."/>
            <person name="Zody M.C."/>
            <person name="Goldstein S."/>
            <person name="She X."/>
            <person name="Bult C.J."/>
            <person name="Agarwala R."/>
            <person name="Cherry J.L."/>
            <person name="DiCuccio M."/>
            <person name="Hlavina W."/>
            <person name="Kapustin Y."/>
            <person name="Meric P."/>
            <person name="Maglott D."/>
            <person name="Birtle Z."/>
            <person name="Marques A.C."/>
            <person name="Graves T."/>
            <person name="Zhou S."/>
            <person name="Teague B."/>
            <person name="Potamousis K."/>
            <person name="Churas C."/>
            <person name="Place M."/>
            <person name="Herschleb J."/>
            <person name="Runnheim R."/>
            <person name="Forrest D."/>
            <person name="Amos-Landgraf J."/>
            <person name="Schwartz D.C."/>
            <person name="Cheng Z."/>
            <person name="Lindblad-Toh K."/>
            <person name="Eichler E.E."/>
            <person name="Ponting C.P."/>
        </authorList>
    </citation>
    <scope>NUCLEOTIDE SEQUENCE [LARGE SCALE GENOMIC DNA]</scope>
    <source>
        <strain>C57BL/6J</strain>
    </source>
</reference>
<reference evidence="6" key="3">
    <citation type="submission" date="2005-09" db="EMBL/GenBank/DDBJ databases">
        <authorList>
            <person name="Mural R.J."/>
            <person name="Adams M.D."/>
            <person name="Myers E.W."/>
            <person name="Smith H.O."/>
            <person name="Venter J.C."/>
        </authorList>
    </citation>
    <scope>NUCLEOTIDE SEQUENCE [LARGE SCALE GENOMIC DNA]</scope>
</reference>
<reference evidence="4" key="4">
    <citation type="journal article" date="2004" name="Genome Res.">
        <title>The status, quality, and expansion of the NIH full-length cDNA project: the Mammalian Gene Collection (MGC).</title>
        <authorList>
            <consortium name="The MGC Project Team"/>
        </authorList>
    </citation>
    <scope>NUCLEOTIDE SEQUENCE [LARGE SCALE MRNA]</scope>
    <source>
        <strain evidence="4">FVB/N</strain>
        <tissue evidence="4">Kidney</tissue>
    </source>
</reference>
<reference key="5">
    <citation type="journal article" date="2009" name="Immunity">
        <title>The phagosomal proteome in interferon-gamma-activated macrophages.</title>
        <authorList>
            <person name="Trost M."/>
            <person name="English L."/>
            <person name="Lemieux S."/>
            <person name="Courcelles M."/>
            <person name="Desjardins M."/>
            <person name="Thibault P."/>
        </authorList>
    </citation>
    <scope>PHOSPHORYLATION [LARGE SCALE ANALYSIS] AT SER-9</scope>
    <scope>IDENTIFICATION BY MASS SPECTROMETRY [LARGE SCALE ANALYSIS]</scope>
</reference>
<reference key="6">
    <citation type="journal article" date="2010" name="Cell">
        <title>A tissue-specific atlas of mouse protein phosphorylation and expression.</title>
        <authorList>
            <person name="Huttlin E.L."/>
            <person name="Jedrychowski M.P."/>
            <person name="Elias J.E."/>
            <person name="Goswami T."/>
            <person name="Rad R."/>
            <person name="Beausoleil S.A."/>
            <person name="Villen J."/>
            <person name="Haas W."/>
            <person name="Sowa M.E."/>
            <person name="Gygi S.P."/>
        </authorList>
    </citation>
    <scope>IDENTIFICATION BY MASS SPECTROMETRY [LARGE SCALE ANALYSIS]</scope>
    <source>
        <tissue>Kidney</tissue>
        <tissue>Liver</tissue>
        <tissue>Lung</tissue>
        <tissue>Pancreas</tissue>
        <tissue>Spleen</tissue>
        <tissue>Testis</tissue>
    </source>
</reference>
<name>SFT2A_MOUSE</name>
<keyword id="KW-0472">Membrane</keyword>
<keyword id="KW-0597">Phosphoprotein</keyword>
<keyword id="KW-0653">Protein transport</keyword>
<keyword id="KW-1185">Reference proteome</keyword>
<keyword id="KW-0812">Transmembrane</keyword>
<keyword id="KW-1133">Transmembrane helix</keyword>
<keyword id="KW-0813">Transport</keyword>
<gene>
    <name evidence="2" type="primary">Sft2d1</name>
</gene>
<feature type="chain" id="PRO_0000238608" description="Vesicle transport protein SFT2A">
    <location>
        <begin position="1"/>
        <end position="159"/>
    </location>
</feature>
<feature type="topological domain" description="Cytoplasmic" evidence="3">
    <location>
        <begin position="1"/>
        <end position="36"/>
    </location>
</feature>
<feature type="transmembrane region" description="Helical; Name=1" evidence="3">
    <location>
        <begin position="37"/>
        <end position="57"/>
    </location>
</feature>
<feature type="topological domain" description="Lumenal" evidence="3">
    <location>
        <begin position="58"/>
        <end position="62"/>
    </location>
</feature>
<feature type="transmembrane region" description="Helical; Name=2" evidence="3">
    <location>
        <begin position="63"/>
        <end position="83"/>
    </location>
</feature>
<feature type="topological domain" description="Cytoplasmic" evidence="3">
    <location>
        <begin position="84"/>
        <end position="97"/>
    </location>
</feature>
<feature type="transmembrane region" description="Helical; Name=3" evidence="3">
    <location>
        <begin position="98"/>
        <end position="118"/>
    </location>
</feature>
<feature type="topological domain" description="Lumenal" evidence="3">
    <location>
        <begin position="119"/>
        <end position="122"/>
    </location>
</feature>
<feature type="transmembrane region" description="Helical; Name=4" evidence="3">
    <location>
        <begin position="123"/>
        <end position="143"/>
    </location>
</feature>
<feature type="topological domain" description="Cytoplasmic" evidence="3">
    <location>
        <begin position="144"/>
        <end position="159"/>
    </location>
</feature>
<feature type="modified residue" description="Phosphoserine" evidence="7">
    <location>
        <position position="9"/>
    </location>
</feature>